<name>GSA_FLAPJ</name>
<proteinExistence type="inferred from homology"/>
<gene>
    <name evidence="1" type="primary">hemL</name>
    <name type="ordered locus">FP1204</name>
</gene>
<comment type="catalytic activity">
    <reaction evidence="1">
        <text>(S)-4-amino-5-oxopentanoate = 5-aminolevulinate</text>
        <dbReference type="Rhea" id="RHEA:14265"/>
        <dbReference type="ChEBI" id="CHEBI:57501"/>
        <dbReference type="ChEBI" id="CHEBI:356416"/>
        <dbReference type="EC" id="5.4.3.8"/>
    </reaction>
</comment>
<comment type="cofactor">
    <cofactor evidence="1">
        <name>pyridoxal 5'-phosphate</name>
        <dbReference type="ChEBI" id="CHEBI:597326"/>
    </cofactor>
</comment>
<comment type="pathway">
    <text evidence="1">Porphyrin-containing compound metabolism; protoporphyrin-IX biosynthesis; 5-aminolevulinate from L-glutamyl-tRNA(Glu): step 2/2.</text>
</comment>
<comment type="subunit">
    <text evidence="1">Homodimer.</text>
</comment>
<comment type="subcellular location">
    <subcellularLocation>
        <location evidence="1">Cytoplasm</location>
    </subcellularLocation>
</comment>
<comment type="similarity">
    <text evidence="1">Belongs to the class-III pyridoxal-phosphate-dependent aminotransferase family. HemL subfamily.</text>
</comment>
<reference key="1">
    <citation type="journal article" date="2007" name="Nat. Biotechnol.">
        <title>Complete genome sequence of the fish pathogen Flavobacterium psychrophilum.</title>
        <authorList>
            <person name="Duchaud E."/>
            <person name="Boussaha M."/>
            <person name="Loux V."/>
            <person name="Bernardet J.-F."/>
            <person name="Michel C."/>
            <person name="Kerouault B."/>
            <person name="Mondot S."/>
            <person name="Nicolas P."/>
            <person name="Bossy R."/>
            <person name="Caron C."/>
            <person name="Bessieres P."/>
            <person name="Gibrat J.-F."/>
            <person name="Claverol S."/>
            <person name="Dumetz F."/>
            <person name="Le Henaff M."/>
            <person name="Benmansour A."/>
        </authorList>
    </citation>
    <scope>NUCLEOTIDE SEQUENCE [LARGE SCALE GENOMIC DNA]</scope>
    <source>
        <strain>ATCC 49511 / DSM 21280 / CIP 103535 / JIP02/86</strain>
    </source>
</reference>
<accession>A6GYW4</accession>
<organism>
    <name type="scientific">Flavobacterium psychrophilum (strain ATCC 49511 / DSM 21280 / CIP 103535 / JIP02/86)</name>
    <dbReference type="NCBI Taxonomy" id="402612"/>
    <lineage>
        <taxon>Bacteria</taxon>
        <taxon>Pseudomonadati</taxon>
        <taxon>Bacteroidota</taxon>
        <taxon>Flavobacteriia</taxon>
        <taxon>Flavobacteriales</taxon>
        <taxon>Flavobacteriaceae</taxon>
        <taxon>Flavobacterium</taxon>
    </lineage>
</organism>
<protein>
    <recommendedName>
        <fullName evidence="1">Glutamate-1-semialdehyde 2,1-aminomutase</fullName>
        <shortName evidence="1">GSA</shortName>
        <ecNumber evidence="1">5.4.3.8</ecNumber>
    </recommendedName>
    <alternativeName>
        <fullName evidence="1">Glutamate-1-semialdehyde aminotransferase</fullName>
        <shortName evidence="1">GSA-AT</shortName>
    </alternativeName>
</protein>
<keyword id="KW-0963">Cytoplasm</keyword>
<keyword id="KW-0413">Isomerase</keyword>
<keyword id="KW-0627">Porphyrin biosynthesis</keyword>
<keyword id="KW-0663">Pyridoxal phosphate</keyword>
<keyword id="KW-1185">Reference proteome</keyword>
<evidence type="ECO:0000255" key="1">
    <source>
        <dbReference type="HAMAP-Rule" id="MF_00375"/>
    </source>
</evidence>
<sequence length="428" mass="46076">MLYKRSSQLFLEAEKVIPGGVNSPVRAFKSVGGTPIFAKSAKGAYVYDEDGNRFVDYINSWGPMILGHAYEPVVTAVIEKAKSGTSFGMPTELETEIAKLAVSMVSNIDKIRFVNSGTEACMSAIRLARGFTKRDKIIKFAGCYHGHSDSFLIQAGSGAITFGSPNSPGVTSGTAKDTLLASYNDIQNVKNLFDANKNEIAAVIIEPVAGNMGCIPPQKGFLEALQQLCHENNALLIFDEVMTGFRLAKGGAQELFNVQADIVCFGKVIGGGLPVGAFAARNEIMNYLAPLGPVYQAGTLSGNPLAMAAGLAMLKALNENQEVFARLEEKTAYLAKGIADVLTSNNVVHTINRVGSMVSVHFDANPVFDFETAKNGDNDTFKKFFHGLLAEGVYIAPSAYETWFISDALTYEDLDFTIRAVDKVSKNL</sequence>
<feature type="chain" id="PRO_0000300910" description="Glutamate-1-semialdehyde 2,1-aminomutase">
    <location>
        <begin position="1"/>
        <end position="428"/>
    </location>
</feature>
<feature type="modified residue" description="N6-(pyridoxal phosphate)lysine" evidence="1">
    <location>
        <position position="267"/>
    </location>
</feature>
<dbReference type="EC" id="5.4.3.8" evidence="1"/>
<dbReference type="EMBL" id="AM398681">
    <property type="protein sequence ID" value="CAL43287.1"/>
    <property type="molecule type" value="Genomic_DNA"/>
</dbReference>
<dbReference type="RefSeq" id="WP_011963336.1">
    <property type="nucleotide sequence ID" value="NC_009613.3"/>
</dbReference>
<dbReference type="RefSeq" id="YP_001296098.1">
    <property type="nucleotide sequence ID" value="NC_009613.3"/>
</dbReference>
<dbReference type="SMR" id="A6GYW4"/>
<dbReference type="STRING" id="402612.FP1204"/>
<dbReference type="EnsemblBacteria" id="CAL43287">
    <property type="protein sequence ID" value="CAL43287"/>
    <property type="gene ID" value="FP1204"/>
</dbReference>
<dbReference type="GeneID" id="66553108"/>
<dbReference type="KEGG" id="fps:FP1204"/>
<dbReference type="PATRIC" id="fig|402612.5.peg.1218"/>
<dbReference type="eggNOG" id="COG0001">
    <property type="taxonomic scope" value="Bacteria"/>
</dbReference>
<dbReference type="HOGENOM" id="CLU_016922_1_5_10"/>
<dbReference type="OrthoDB" id="9807885at2"/>
<dbReference type="UniPathway" id="UPA00251">
    <property type="reaction ID" value="UER00317"/>
</dbReference>
<dbReference type="Proteomes" id="UP000006394">
    <property type="component" value="Chromosome"/>
</dbReference>
<dbReference type="GO" id="GO:0005737">
    <property type="term" value="C:cytoplasm"/>
    <property type="evidence" value="ECO:0007669"/>
    <property type="project" value="UniProtKB-SubCell"/>
</dbReference>
<dbReference type="GO" id="GO:0042286">
    <property type="term" value="F:glutamate-1-semialdehyde 2,1-aminomutase activity"/>
    <property type="evidence" value="ECO:0007669"/>
    <property type="project" value="UniProtKB-UniRule"/>
</dbReference>
<dbReference type="GO" id="GO:0030170">
    <property type="term" value="F:pyridoxal phosphate binding"/>
    <property type="evidence" value="ECO:0007669"/>
    <property type="project" value="InterPro"/>
</dbReference>
<dbReference type="GO" id="GO:0008483">
    <property type="term" value="F:transaminase activity"/>
    <property type="evidence" value="ECO:0007669"/>
    <property type="project" value="InterPro"/>
</dbReference>
<dbReference type="GO" id="GO:0006782">
    <property type="term" value="P:protoporphyrinogen IX biosynthetic process"/>
    <property type="evidence" value="ECO:0007669"/>
    <property type="project" value="UniProtKB-UniRule"/>
</dbReference>
<dbReference type="CDD" id="cd00610">
    <property type="entry name" value="OAT_like"/>
    <property type="match status" value="1"/>
</dbReference>
<dbReference type="FunFam" id="3.40.640.10:FF:000021">
    <property type="entry name" value="Glutamate-1-semialdehyde 2,1-aminomutase"/>
    <property type="match status" value="1"/>
</dbReference>
<dbReference type="Gene3D" id="3.90.1150.10">
    <property type="entry name" value="Aspartate Aminotransferase, domain 1"/>
    <property type="match status" value="1"/>
</dbReference>
<dbReference type="Gene3D" id="3.40.640.10">
    <property type="entry name" value="Type I PLP-dependent aspartate aminotransferase-like (Major domain)"/>
    <property type="match status" value="1"/>
</dbReference>
<dbReference type="HAMAP" id="MF_00375">
    <property type="entry name" value="HemL_aminotrans_3"/>
    <property type="match status" value="1"/>
</dbReference>
<dbReference type="InterPro" id="IPR004639">
    <property type="entry name" value="4pyrrol_synth_GluAld_NH2Trfase"/>
</dbReference>
<dbReference type="InterPro" id="IPR005814">
    <property type="entry name" value="Aminotrans_3"/>
</dbReference>
<dbReference type="InterPro" id="IPR049704">
    <property type="entry name" value="Aminotrans_3_PPA_site"/>
</dbReference>
<dbReference type="InterPro" id="IPR015424">
    <property type="entry name" value="PyrdxlP-dep_Trfase"/>
</dbReference>
<dbReference type="InterPro" id="IPR015421">
    <property type="entry name" value="PyrdxlP-dep_Trfase_major"/>
</dbReference>
<dbReference type="InterPro" id="IPR015422">
    <property type="entry name" value="PyrdxlP-dep_Trfase_small"/>
</dbReference>
<dbReference type="NCBIfam" id="TIGR00713">
    <property type="entry name" value="hemL"/>
    <property type="match status" value="1"/>
</dbReference>
<dbReference type="NCBIfam" id="NF000818">
    <property type="entry name" value="PRK00062.1"/>
    <property type="match status" value="1"/>
</dbReference>
<dbReference type="PANTHER" id="PTHR43713">
    <property type="entry name" value="GLUTAMATE-1-SEMIALDEHYDE 2,1-AMINOMUTASE"/>
    <property type="match status" value="1"/>
</dbReference>
<dbReference type="PANTHER" id="PTHR43713:SF3">
    <property type="entry name" value="GLUTAMATE-1-SEMIALDEHYDE 2,1-AMINOMUTASE 1, CHLOROPLASTIC-RELATED"/>
    <property type="match status" value="1"/>
</dbReference>
<dbReference type="Pfam" id="PF00202">
    <property type="entry name" value="Aminotran_3"/>
    <property type="match status" value="1"/>
</dbReference>
<dbReference type="SUPFAM" id="SSF53383">
    <property type="entry name" value="PLP-dependent transferases"/>
    <property type="match status" value="1"/>
</dbReference>
<dbReference type="PROSITE" id="PS00600">
    <property type="entry name" value="AA_TRANSFER_CLASS_3"/>
    <property type="match status" value="1"/>
</dbReference>